<reference key="1">
    <citation type="journal article" date="2008" name="J. Bacteriol.">
        <title>Genome sequence of a nephritogenic and highly transformable M49 strain of Streptococcus pyogenes.</title>
        <authorList>
            <person name="McShan W.M."/>
            <person name="Ferretti J.J."/>
            <person name="Karasawa T."/>
            <person name="Suvorov A.N."/>
            <person name="Lin S."/>
            <person name="Qin B."/>
            <person name="Jia H."/>
            <person name="Kenton S."/>
            <person name="Najar F."/>
            <person name="Wu H."/>
            <person name="Scott J."/>
            <person name="Roe B.A."/>
            <person name="Savic D.J."/>
        </authorList>
    </citation>
    <scope>NUCLEOTIDE SEQUENCE [LARGE SCALE GENOMIC DNA]</scope>
    <source>
        <strain>NZ131</strain>
    </source>
</reference>
<keyword id="KW-0963">Cytoplasm</keyword>
<keyword id="KW-0378">Hydrolase</keyword>
<keyword id="KW-0464">Manganese</keyword>
<keyword id="KW-0479">Metal-binding</keyword>
<name>PPAC_STRPZ</name>
<comment type="catalytic activity">
    <reaction evidence="1">
        <text>diphosphate + H2O = 2 phosphate + H(+)</text>
        <dbReference type="Rhea" id="RHEA:24576"/>
        <dbReference type="ChEBI" id="CHEBI:15377"/>
        <dbReference type="ChEBI" id="CHEBI:15378"/>
        <dbReference type="ChEBI" id="CHEBI:33019"/>
        <dbReference type="ChEBI" id="CHEBI:43474"/>
        <dbReference type="EC" id="3.6.1.1"/>
    </reaction>
</comment>
<comment type="cofactor">
    <cofactor evidence="1">
        <name>Mn(2+)</name>
        <dbReference type="ChEBI" id="CHEBI:29035"/>
    </cofactor>
    <text evidence="1">Binds 2 manganese ions per subunit.</text>
</comment>
<comment type="subcellular location">
    <subcellularLocation>
        <location evidence="1">Cytoplasm</location>
    </subcellularLocation>
</comment>
<comment type="similarity">
    <text evidence="1">Belongs to the PPase class C family.</text>
</comment>
<organism>
    <name type="scientific">Streptococcus pyogenes serotype M49 (strain NZ131)</name>
    <dbReference type="NCBI Taxonomy" id="471876"/>
    <lineage>
        <taxon>Bacteria</taxon>
        <taxon>Bacillati</taxon>
        <taxon>Bacillota</taxon>
        <taxon>Bacilli</taxon>
        <taxon>Lactobacillales</taxon>
        <taxon>Streptococcaceae</taxon>
        <taxon>Streptococcus</taxon>
    </lineage>
</organism>
<evidence type="ECO:0000255" key="1">
    <source>
        <dbReference type="HAMAP-Rule" id="MF_00207"/>
    </source>
</evidence>
<protein>
    <recommendedName>
        <fullName evidence="1">Probable manganese-dependent inorganic pyrophosphatase</fullName>
        <ecNumber evidence="1">3.6.1.1</ecNumber>
    </recommendedName>
    <alternativeName>
        <fullName evidence="1">Pyrophosphate phospho-hydrolase</fullName>
        <shortName evidence="1">PPase</shortName>
    </alternativeName>
</protein>
<gene>
    <name evidence="1" type="primary">ppaC</name>
    <name type="ordered locus">Spy49_0313</name>
</gene>
<accession>B5XJY9</accession>
<feature type="chain" id="PRO_1000099655" description="Probable manganese-dependent inorganic pyrophosphatase">
    <location>
        <begin position="1"/>
        <end position="311"/>
    </location>
</feature>
<feature type="binding site" evidence="1">
    <location>
        <position position="9"/>
    </location>
    <ligand>
        <name>Mn(2+)</name>
        <dbReference type="ChEBI" id="CHEBI:29035"/>
        <label>1</label>
    </ligand>
</feature>
<feature type="binding site" evidence="1">
    <location>
        <position position="13"/>
    </location>
    <ligand>
        <name>Mn(2+)</name>
        <dbReference type="ChEBI" id="CHEBI:29035"/>
        <label>1</label>
    </ligand>
</feature>
<feature type="binding site" evidence="1">
    <location>
        <position position="15"/>
    </location>
    <ligand>
        <name>Mn(2+)</name>
        <dbReference type="ChEBI" id="CHEBI:29035"/>
        <label>2</label>
    </ligand>
</feature>
<feature type="binding site" evidence="1">
    <location>
        <position position="77"/>
    </location>
    <ligand>
        <name>Mn(2+)</name>
        <dbReference type="ChEBI" id="CHEBI:29035"/>
        <label>1</label>
    </ligand>
</feature>
<feature type="binding site" evidence="1">
    <location>
        <position position="77"/>
    </location>
    <ligand>
        <name>Mn(2+)</name>
        <dbReference type="ChEBI" id="CHEBI:29035"/>
        <label>2</label>
    </ligand>
</feature>
<feature type="binding site" evidence="1">
    <location>
        <position position="99"/>
    </location>
    <ligand>
        <name>Mn(2+)</name>
        <dbReference type="ChEBI" id="CHEBI:29035"/>
        <label>2</label>
    </ligand>
</feature>
<feature type="binding site" evidence="1">
    <location>
        <position position="151"/>
    </location>
    <ligand>
        <name>Mn(2+)</name>
        <dbReference type="ChEBI" id="CHEBI:29035"/>
        <label>2</label>
    </ligand>
</feature>
<sequence length="311" mass="33633">MSKILVFGHQNPDTDAIASSYAFDYLSQKAFGLDTEVVALGTPNEETAFALDYFGVEAPRVVESAKAQGSEQVILTDHNEFQQSIADIREVEVYGVVDHHRVANFETANPLYMRVEPVGSASSIVYRMFKENGIEVPKAIAGMLLSGLISDTLLLKSPTTHVSDHLVAEELAELAEVNLEDYGMALLKAGTNLASKSEVELIGIDAKTFELNGNAVRVAQVNTVDISEVLERQEAIEAAIKDAMAAEGYSDFVLMITDIVNSNSEILAIGANMDKVEAAFNFTLDNNHAFLAGAVSRKKQVVPQLTESFGA</sequence>
<dbReference type="EC" id="3.6.1.1" evidence="1"/>
<dbReference type="EMBL" id="CP000829">
    <property type="protein sequence ID" value="ACI60651.1"/>
    <property type="molecule type" value="Genomic_DNA"/>
</dbReference>
<dbReference type="SMR" id="B5XJY9"/>
<dbReference type="KEGG" id="soz:Spy49_0313"/>
<dbReference type="HOGENOM" id="CLU_025243_0_1_9"/>
<dbReference type="Proteomes" id="UP000001039">
    <property type="component" value="Chromosome"/>
</dbReference>
<dbReference type="GO" id="GO:0005737">
    <property type="term" value="C:cytoplasm"/>
    <property type="evidence" value="ECO:0007669"/>
    <property type="project" value="UniProtKB-SubCell"/>
</dbReference>
<dbReference type="GO" id="GO:0004427">
    <property type="term" value="F:inorganic diphosphate phosphatase activity"/>
    <property type="evidence" value="ECO:0007669"/>
    <property type="project" value="UniProtKB-UniRule"/>
</dbReference>
<dbReference type="GO" id="GO:0030145">
    <property type="term" value="F:manganese ion binding"/>
    <property type="evidence" value="ECO:0007669"/>
    <property type="project" value="UniProtKB-UniRule"/>
</dbReference>
<dbReference type="FunFam" id="3.10.310.20:FF:000001">
    <property type="entry name" value="Probable manganese-dependent inorganic pyrophosphatase"/>
    <property type="match status" value="1"/>
</dbReference>
<dbReference type="FunFam" id="3.90.1640.10:FF:000001">
    <property type="entry name" value="Probable manganese-dependent inorganic pyrophosphatase"/>
    <property type="match status" value="1"/>
</dbReference>
<dbReference type="Gene3D" id="3.10.310.20">
    <property type="entry name" value="DHHA2 domain"/>
    <property type="match status" value="1"/>
</dbReference>
<dbReference type="Gene3D" id="3.90.1640.10">
    <property type="entry name" value="inorganic pyrophosphatase (n-terminal core)"/>
    <property type="match status" value="1"/>
</dbReference>
<dbReference type="HAMAP" id="MF_00207">
    <property type="entry name" value="PPase_C"/>
    <property type="match status" value="1"/>
</dbReference>
<dbReference type="InterPro" id="IPR001667">
    <property type="entry name" value="DDH_dom"/>
</dbReference>
<dbReference type="InterPro" id="IPR038763">
    <property type="entry name" value="DHH_sf"/>
</dbReference>
<dbReference type="InterPro" id="IPR004097">
    <property type="entry name" value="DHHA2"/>
</dbReference>
<dbReference type="InterPro" id="IPR038222">
    <property type="entry name" value="DHHA2_dom_sf"/>
</dbReference>
<dbReference type="InterPro" id="IPR022934">
    <property type="entry name" value="Mn-dep_inorganic_PyrPase"/>
</dbReference>
<dbReference type="InterPro" id="IPR051319">
    <property type="entry name" value="Oligoribo/pAp-PDE_c-di-AMP_PDE"/>
</dbReference>
<dbReference type="NCBIfam" id="NF003877">
    <property type="entry name" value="PRK05427.1"/>
    <property type="match status" value="1"/>
</dbReference>
<dbReference type="PANTHER" id="PTHR47618">
    <property type="entry name" value="BIFUNCTIONAL OLIGORIBONUCLEASE AND PAP PHOSPHATASE NRNA"/>
    <property type="match status" value="1"/>
</dbReference>
<dbReference type="PANTHER" id="PTHR47618:SF1">
    <property type="entry name" value="BIFUNCTIONAL OLIGORIBONUCLEASE AND PAP PHOSPHATASE NRNA"/>
    <property type="match status" value="1"/>
</dbReference>
<dbReference type="Pfam" id="PF01368">
    <property type="entry name" value="DHH"/>
    <property type="match status" value="1"/>
</dbReference>
<dbReference type="Pfam" id="PF02833">
    <property type="entry name" value="DHHA2"/>
    <property type="match status" value="1"/>
</dbReference>
<dbReference type="SMART" id="SM01131">
    <property type="entry name" value="DHHA2"/>
    <property type="match status" value="1"/>
</dbReference>
<dbReference type="SUPFAM" id="SSF64182">
    <property type="entry name" value="DHH phosphoesterases"/>
    <property type="match status" value="1"/>
</dbReference>
<proteinExistence type="inferred from homology"/>